<proteinExistence type="inferred from homology"/>
<reference key="1">
    <citation type="journal article" date="1996" name="DNA Res.">
        <title>Sequence analysis of the genome of the unicellular cyanobacterium Synechocystis sp. strain PCC6803. II. Sequence determination of the entire genome and assignment of potential protein-coding regions.</title>
        <authorList>
            <person name="Kaneko T."/>
            <person name="Sato S."/>
            <person name="Kotani H."/>
            <person name="Tanaka A."/>
            <person name="Asamizu E."/>
            <person name="Nakamura Y."/>
            <person name="Miyajima N."/>
            <person name="Hirosawa M."/>
            <person name="Sugiura M."/>
            <person name="Sasamoto S."/>
            <person name="Kimura T."/>
            <person name="Hosouchi T."/>
            <person name="Matsuno A."/>
            <person name="Muraki A."/>
            <person name="Nakazaki N."/>
            <person name="Naruo K."/>
            <person name="Okumura S."/>
            <person name="Shimpo S."/>
            <person name="Takeuchi C."/>
            <person name="Wada T."/>
            <person name="Watanabe A."/>
            <person name="Yamada M."/>
            <person name="Yasuda M."/>
            <person name="Tabata S."/>
        </authorList>
    </citation>
    <scope>NUCLEOTIDE SEQUENCE [LARGE SCALE GENOMIC DNA]</scope>
    <source>
        <strain>ATCC 27184 / PCC 6803 / Kazusa</strain>
    </source>
</reference>
<gene>
    <name type="primary">cphA</name>
    <name type="ordered locus">slr2002</name>
</gene>
<sequence length="873" mass="94695">MKILKTLTLRGPNYWSIRRKKLIVMRLDLEDLAERPSNSIPGFYEGLIRVLPSLVEHFCSPGHRGGFLARVREGTYMGHIVEHVALELQELVGMTAGFGRTRETSTPGIYNVVYEYVDEQAGRYAGRAAVRLCRSLVDTGDYSLTELEKDLEDLRDLGANSALGPSTETIVTEADARKIPWMLLSARAMVQLGYGVHQQRIQATLSSHSGILGVELACDKEGTKTILQDAGIPVPRGTTIQYFDDLEEAINDVGGYPVVIKPLDGNHGRGITINVRHWEEAIAAYDLAAEESKSRSIIVERYYEGSDHRVLVVNGKLVAVAERIPAHVTGDGTSTITELIDKTNQDPNRGDGHANILTKIVVNKTAIDVMERQGYNLDSVLPKDEVVYLRATANLSTGGIAIDRTDDIHPENIWLMERVAKVIGLDIAGIDVVTSDISKPLRETNGVIVEVNAAPGFRMHVAPSQGLPRNVAAPVLDMLFPSGTPSRIPILAVTGTNGKTTTTRLLAHIYRQTGKTVGYTSTDAIYINEYCVEKGDNTGPQSAAVILRDPTVEVAVLETARGGILRAGLAFDTCDVGVVLNVAADHLGLGDIDTIEQMAKVKSVIAEVVDPSGYAVLNADDPLVAAMADKVKAKVAYFSMNPDNPVIQNHIRRNGIAAVYESGYVSILEGSWTLRVEEATLIPMTMGGMAPFMIANALAACLAAFVNGLDVEVIRQGVRTFTTSAEQTPGRMNLFNLGRYHALVDYAHNPAGYRAVGDFVKNWHGQRFGVVGGPGDRRDSDLIELGQIAAQVFDRIIVKEDDDKRGRSGGETADLIVKGILQENPGAAYEVILDETVALNKALDQVEEKGLVVVFPESVSKAIELIKARKPIG</sequence>
<feature type="chain" id="PRO_0000101714" description="Cyanophycin synthetase">
    <location>
        <begin position="1"/>
        <end position="873"/>
    </location>
</feature>
<feature type="domain" description="ATP-grasp" evidence="2">
    <location>
        <begin position="224"/>
        <end position="480"/>
    </location>
</feature>
<feature type="binding site" evidence="2">
    <location>
        <begin position="495"/>
        <end position="501"/>
    </location>
    <ligand>
        <name>ATP</name>
        <dbReference type="ChEBI" id="CHEBI:30616"/>
    </ligand>
</feature>
<keyword id="KW-0067">ATP-binding</keyword>
<keyword id="KW-0436">Ligase</keyword>
<keyword id="KW-0547">Nucleotide-binding</keyword>
<keyword id="KW-1185">Reference proteome</keyword>
<protein>
    <recommendedName>
        <fullName>Cyanophycin synthetase</fullName>
        <ecNumber>6.3.2.29</ecNumber>
        <ecNumber>6.3.2.30</ecNumber>
    </recommendedName>
    <alternativeName>
        <fullName>Cyanophycin synthase</fullName>
    </alternativeName>
</protein>
<organism>
    <name type="scientific">Synechocystis sp. (strain ATCC 27184 / PCC 6803 / Kazusa)</name>
    <dbReference type="NCBI Taxonomy" id="1111708"/>
    <lineage>
        <taxon>Bacteria</taxon>
        <taxon>Bacillati</taxon>
        <taxon>Cyanobacteriota</taxon>
        <taxon>Cyanophyceae</taxon>
        <taxon>Synechococcales</taxon>
        <taxon>Merismopediaceae</taxon>
        <taxon>Synechocystis</taxon>
    </lineage>
</organism>
<dbReference type="EC" id="6.3.2.29"/>
<dbReference type="EC" id="6.3.2.30"/>
<dbReference type="EMBL" id="BA000022">
    <property type="protein sequence ID" value="BAA17890.1"/>
    <property type="molecule type" value="Genomic_DNA"/>
</dbReference>
<dbReference type="PIR" id="S75028">
    <property type="entry name" value="S75028"/>
</dbReference>
<dbReference type="SMR" id="P73833"/>
<dbReference type="STRING" id="1148.gene:10498759"/>
<dbReference type="PaxDb" id="1148-1652973"/>
<dbReference type="EnsemblBacteria" id="BAA17890">
    <property type="protein sequence ID" value="BAA17890"/>
    <property type="gene ID" value="BAA17890"/>
</dbReference>
<dbReference type="KEGG" id="syn:slr2002"/>
<dbReference type="eggNOG" id="COG0189">
    <property type="taxonomic scope" value="Bacteria"/>
</dbReference>
<dbReference type="eggNOG" id="COG0769">
    <property type="taxonomic scope" value="Bacteria"/>
</dbReference>
<dbReference type="InParanoid" id="P73833"/>
<dbReference type="BRENDA" id="6.3.2.29">
    <property type="organism ID" value="382"/>
</dbReference>
<dbReference type="BRENDA" id="6.3.2.30">
    <property type="organism ID" value="382"/>
</dbReference>
<dbReference type="SABIO-RK" id="P73833"/>
<dbReference type="Proteomes" id="UP000001425">
    <property type="component" value="Chromosome"/>
</dbReference>
<dbReference type="GO" id="GO:0005524">
    <property type="term" value="F:ATP binding"/>
    <property type="evidence" value="ECO:0007669"/>
    <property type="project" value="UniProtKB-KW"/>
</dbReference>
<dbReference type="GO" id="GO:0071161">
    <property type="term" value="F:cyanophycin synthetase activity (L-arginine-adding)"/>
    <property type="evidence" value="ECO:0007669"/>
    <property type="project" value="UniProtKB-EC"/>
</dbReference>
<dbReference type="GO" id="GO:0071160">
    <property type="term" value="F:cyanophycin synthetase activity (L-aspartate-adding)"/>
    <property type="evidence" value="ECO:0007669"/>
    <property type="project" value="UniProtKB-EC"/>
</dbReference>
<dbReference type="GO" id="GO:0046872">
    <property type="term" value="F:metal ion binding"/>
    <property type="evidence" value="ECO:0007669"/>
    <property type="project" value="InterPro"/>
</dbReference>
<dbReference type="GO" id="GO:0009058">
    <property type="term" value="P:biosynthetic process"/>
    <property type="evidence" value="ECO:0007669"/>
    <property type="project" value="InterPro"/>
</dbReference>
<dbReference type="Gene3D" id="3.30.470.20">
    <property type="entry name" value="ATP-grasp fold, B domain"/>
    <property type="match status" value="2"/>
</dbReference>
<dbReference type="Gene3D" id="3.90.190.20">
    <property type="entry name" value="Mur ligase, C-terminal domain"/>
    <property type="match status" value="1"/>
</dbReference>
<dbReference type="Gene3D" id="3.40.1190.10">
    <property type="entry name" value="Mur-like, catalytic domain"/>
    <property type="match status" value="1"/>
</dbReference>
<dbReference type="InterPro" id="IPR011761">
    <property type="entry name" value="ATP-grasp"/>
</dbReference>
<dbReference type="InterPro" id="IPR013651">
    <property type="entry name" value="ATP-grasp_RimK-type"/>
</dbReference>
<dbReference type="InterPro" id="IPR011810">
    <property type="entry name" value="Cya_phycin_syn"/>
</dbReference>
<dbReference type="InterPro" id="IPR044019">
    <property type="entry name" value="Cyanophycin_syn_N"/>
</dbReference>
<dbReference type="InterPro" id="IPR036565">
    <property type="entry name" value="Mur-like_cat_sf"/>
</dbReference>
<dbReference type="InterPro" id="IPR004101">
    <property type="entry name" value="Mur_ligase_C"/>
</dbReference>
<dbReference type="InterPro" id="IPR036615">
    <property type="entry name" value="Mur_ligase_C_dom_sf"/>
</dbReference>
<dbReference type="InterPro" id="IPR013221">
    <property type="entry name" value="Mur_ligase_cen"/>
</dbReference>
<dbReference type="NCBIfam" id="TIGR02068">
    <property type="entry name" value="cya_phycin_syn"/>
    <property type="match status" value="1"/>
</dbReference>
<dbReference type="NCBIfam" id="NF010623">
    <property type="entry name" value="PRK14016.1"/>
    <property type="match status" value="1"/>
</dbReference>
<dbReference type="PANTHER" id="PTHR23135:SF18">
    <property type="entry name" value="CYANOPHYCIN SYNTHETASE"/>
    <property type="match status" value="1"/>
</dbReference>
<dbReference type="PANTHER" id="PTHR23135">
    <property type="entry name" value="MUR LIGASE FAMILY MEMBER"/>
    <property type="match status" value="1"/>
</dbReference>
<dbReference type="Pfam" id="PF18921">
    <property type="entry name" value="Cyanophycin_syn"/>
    <property type="match status" value="1"/>
</dbReference>
<dbReference type="Pfam" id="PF02875">
    <property type="entry name" value="Mur_ligase_C"/>
    <property type="match status" value="1"/>
</dbReference>
<dbReference type="Pfam" id="PF08245">
    <property type="entry name" value="Mur_ligase_M"/>
    <property type="match status" value="1"/>
</dbReference>
<dbReference type="Pfam" id="PF08443">
    <property type="entry name" value="RimK"/>
    <property type="match status" value="1"/>
</dbReference>
<dbReference type="SUPFAM" id="SSF56059">
    <property type="entry name" value="Glutathione synthetase ATP-binding domain-like"/>
    <property type="match status" value="1"/>
</dbReference>
<dbReference type="SUPFAM" id="SSF53623">
    <property type="entry name" value="MurD-like peptide ligases, catalytic domain"/>
    <property type="match status" value="1"/>
</dbReference>
<dbReference type="SUPFAM" id="SSF53244">
    <property type="entry name" value="MurD-like peptide ligases, peptide-binding domain"/>
    <property type="match status" value="1"/>
</dbReference>
<dbReference type="PROSITE" id="PS50975">
    <property type="entry name" value="ATP_GRASP"/>
    <property type="match status" value="1"/>
</dbReference>
<name>CPHA_SYNY3</name>
<evidence type="ECO:0000250" key="1"/>
<evidence type="ECO:0000255" key="2">
    <source>
        <dbReference type="PROSITE-ProRule" id="PRU00409"/>
    </source>
</evidence>
<evidence type="ECO:0000305" key="3"/>
<accession>P73833</accession>
<comment type="function">
    <text evidence="1">Catalyzes the ATP-dependent polymerization of arginine and aspartate to multi-L-arginyl-poly-L-aspartic acid (cyanophycin; a water-insoluble reserve polymer).</text>
</comment>
<comment type="catalytic activity">
    <reaction>
        <text>[L-4-(L-arginin-2-N-yl)aspartate](n) + L-aspartate + ATP = [L-4-(L-arginin-2-N-yl)aspartate](n)-L-aspartate + ADP + phosphate + H(+)</text>
        <dbReference type="Rhea" id="RHEA:13277"/>
        <dbReference type="Rhea" id="RHEA-COMP:13728"/>
        <dbReference type="Rhea" id="RHEA-COMP:13733"/>
        <dbReference type="ChEBI" id="CHEBI:15378"/>
        <dbReference type="ChEBI" id="CHEBI:29991"/>
        <dbReference type="ChEBI" id="CHEBI:30616"/>
        <dbReference type="ChEBI" id="CHEBI:43474"/>
        <dbReference type="ChEBI" id="CHEBI:137986"/>
        <dbReference type="ChEBI" id="CHEBI:137990"/>
        <dbReference type="ChEBI" id="CHEBI:456216"/>
        <dbReference type="EC" id="6.3.2.29"/>
    </reaction>
</comment>
<comment type="catalytic activity">
    <reaction>
        <text>[L-4-(L-arginin-2-N-yl)aspartate](n)-L-aspartate + L-arginine + ATP = [L-4-(L-arginin-2-N-yl)aspartate](n+1) + ADP + phosphate + H(+)</text>
        <dbReference type="Rhea" id="RHEA:23888"/>
        <dbReference type="Rhea" id="RHEA-COMP:13732"/>
        <dbReference type="Rhea" id="RHEA-COMP:13733"/>
        <dbReference type="ChEBI" id="CHEBI:15378"/>
        <dbReference type="ChEBI" id="CHEBI:30616"/>
        <dbReference type="ChEBI" id="CHEBI:32682"/>
        <dbReference type="ChEBI" id="CHEBI:43474"/>
        <dbReference type="ChEBI" id="CHEBI:137986"/>
        <dbReference type="ChEBI" id="CHEBI:137990"/>
        <dbReference type="ChEBI" id="CHEBI:456216"/>
        <dbReference type="EC" id="6.3.2.30"/>
    </reaction>
</comment>
<comment type="subunit">
    <text evidence="1">Homodimer.</text>
</comment>
<comment type="similarity">
    <text evidence="3">In the C-terminal section; belongs to the MurCDEF family.</text>
</comment>